<sequence length="216" mass="24073">MSSLVTPQHAEELSTGARQLGVELSAEHHEKLLGYLALLIKWNKAYNLTAVRDPDEMVSRHLLDSLSVMSFIHNERDNWLDVGSGGGMPGIPLAILHPHKRVTVLDANGKKTRFLTQVKMELKLDNLTVIHSRVEAFQPAQPFDGIISRAFSSMENFTNWTRHLGDTGTQWLAMKGLHPADELVALPADFTVESEQALTVPGCQGQRHLLILRRKA</sequence>
<proteinExistence type="inferred from homology"/>
<gene>
    <name evidence="1" type="primary">rsmG</name>
    <name type="ordered locus">PputGB1_5441</name>
</gene>
<evidence type="ECO:0000255" key="1">
    <source>
        <dbReference type="HAMAP-Rule" id="MF_00074"/>
    </source>
</evidence>
<protein>
    <recommendedName>
        <fullName evidence="1">Ribosomal RNA small subunit methyltransferase G</fullName>
        <ecNumber evidence="1">2.1.1.170</ecNumber>
    </recommendedName>
    <alternativeName>
        <fullName evidence="1">16S rRNA 7-methylguanosine methyltransferase</fullName>
        <shortName evidence="1">16S rRNA m7G methyltransferase</shortName>
    </alternativeName>
</protein>
<comment type="function">
    <text evidence="1">Specifically methylates the N7 position of guanine in position 527 of 16S rRNA.</text>
</comment>
<comment type="catalytic activity">
    <reaction evidence="1">
        <text>guanosine(527) in 16S rRNA + S-adenosyl-L-methionine = N(7)-methylguanosine(527) in 16S rRNA + S-adenosyl-L-homocysteine</text>
        <dbReference type="Rhea" id="RHEA:42732"/>
        <dbReference type="Rhea" id="RHEA-COMP:10209"/>
        <dbReference type="Rhea" id="RHEA-COMP:10210"/>
        <dbReference type="ChEBI" id="CHEBI:57856"/>
        <dbReference type="ChEBI" id="CHEBI:59789"/>
        <dbReference type="ChEBI" id="CHEBI:74269"/>
        <dbReference type="ChEBI" id="CHEBI:74480"/>
        <dbReference type="EC" id="2.1.1.170"/>
    </reaction>
</comment>
<comment type="subcellular location">
    <subcellularLocation>
        <location evidence="1">Cytoplasm</location>
    </subcellularLocation>
</comment>
<comment type="similarity">
    <text evidence="1">Belongs to the methyltransferase superfamily. RNA methyltransferase RsmG family.</text>
</comment>
<feature type="chain" id="PRO_1000075226" description="Ribosomal RNA small subunit methyltransferase G">
    <location>
        <begin position="1"/>
        <end position="216"/>
    </location>
</feature>
<feature type="binding site" evidence="1">
    <location>
        <position position="83"/>
    </location>
    <ligand>
        <name>S-adenosyl-L-methionine</name>
        <dbReference type="ChEBI" id="CHEBI:59789"/>
    </ligand>
</feature>
<feature type="binding site" evidence="1">
    <location>
        <position position="88"/>
    </location>
    <ligand>
        <name>S-adenosyl-L-methionine</name>
        <dbReference type="ChEBI" id="CHEBI:59789"/>
    </ligand>
</feature>
<feature type="binding site" evidence="1">
    <location>
        <begin position="134"/>
        <end position="135"/>
    </location>
    <ligand>
        <name>S-adenosyl-L-methionine</name>
        <dbReference type="ChEBI" id="CHEBI:59789"/>
    </ligand>
</feature>
<feature type="binding site" evidence="1">
    <location>
        <position position="149"/>
    </location>
    <ligand>
        <name>S-adenosyl-L-methionine</name>
        <dbReference type="ChEBI" id="CHEBI:59789"/>
    </ligand>
</feature>
<accession>B0KRB8</accession>
<keyword id="KW-0963">Cytoplasm</keyword>
<keyword id="KW-0489">Methyltransferase</keyword>
<keyword id="KW-0698">rRNA processing</keyword>
<keyword id="KW-0949">S-adenosyl-L-methionine</keyword>
<keyword id="KW-0808">Transferase</keyword>
<reference key="1">
    <citation type="submission" date="2008-01" db="EMBL/GenBank/DDBJ databases">
        <title>Complete sequence of Pseudomonas putida GB-1.</title>
        <authorList>
            <consortium name="US DOE Joint Genome Institute"/>
            <person name="Copeland A."/>
            <person name="Lucas S."/>
            <person name="Lapidus A."/>
            <person name="Barry K."/>
            <person name="Glavina del Rio T."/>
            <person name="Dalin E."/>
            <person name="Tice H."/>
            <person name="Pitluck S."/>
            <person name="Bruce D."/>
            <person name="Goodwin L."/>
            <person name="Chertkov O."/>
            <person name="Brettin T."/>
            <person name="Detter J.C."/>
            <person name="Han C."/>
            <person name="Kuske C.R."/>
            <person name="Schmutz J."/>
            <person name="Larimer F."/>
            <person name="Land M."/>
            <person name="Hauser L."/>
            <person name="Kyrpides N."/>
            <person name="Kim E."/>
            <person name="McCarthy J.K."/>
            <person name="Richardson P."/>
        </authorList>
    </citation>
    <scope>NUCLEOTIDE SEQUENCE [LARGE SCALE GENOMIC DNA]</scope>
    <source>
        <strain>GB-1</strain>
    </source>
</reference>
<dbReference type="EC" id="2.1.1.170" evidence="1"/>
<dbReference type="EMBL" id="CP000926">
    <property type="protein sequence ID" value="ABZ01323.1"/>
    <property type="molecule type" value="Genomic_DNA"/>
</dbReference>
<dbReference type="RefSeq" id="WP_012274914.1">
    <property type="nucleotide sequence ID" value="NC_010322.1"/>
</dbReference>
<dbReference type="SMR" id="B0KRB8"/>
<dbReference type="KEGG" id="ppg:PputGB1_5441"/>
<dbReference type="eggNOG" id="COG0357">
    <property type="taxonomic scope" value="Bacteria"/>
</dbReference>
<dbReference type="HOGENOM" id="CLU_065341_2_0_6"/>
<dbReference type="Proteomes" id="UP000002157">
    <property type="component" value="Chromosome"/>
</dbReference>
<dbReference type="GO" id="GO:0005829">
    <property type="term" value="C:cytosol"/>
    <property type="evidence" value="ECO:0007669"/>
    <property type="project" value="TreeGrafter"/>
</dbReference>
<dbReference type="GO" id="GO:0070043">
    <property type="term" value="F:rRNA (guanine-N7-)-methyltransferase activity"/>
    <property type="evidence" value="ECO:0007669"/>
    <property type="project" value="UniProtKB-UniRule"/>
</dbReference>
<dbReference type="CDD" id="cd02440">
    <property type="entry name" value="AdoMet_MTases"/>
    <property type="match status" value="1"/>
</dbReference>
<dbReference type="Gene3D" id="3.40.50.150">
    <property type="entry name" value="Vaccinia Virus protein VP39"/>
    <property type="match status" value="1"/>
</dbReference>
<dbReference type="HAMAP" id="MF_00074">
    <property type="entry name" value="16SrRNA_methyltr_G"/>
    <property type="match status" value="1"/>
</dbReference>
<dbReference type="InterPro" id="IPR003682">
    <property type="entry name" value="rRNA_ssu_MeTfrase_G"/>
</dbReference>
<dbReference type="InterPro" id="IPR029063">
    <property type="entry name" value="SAM-dependent_MTases_sf"/>
</dbReference>
<dbReference type="NCBIfam" id="TIGR00138">
    <property type="entry name" value="rsmG_gidB"/>
    <property type="match status" value="1"/>
</dbReference>
<dbReference type="PANTHER" id="PTHR31760">
    <property type="entry name" value="S-ADENOSYL-L-METHIONINE-DEPENDENT METHYLTRANSFERASES SUPERFAMILY PROTEIN"/>
    <property type="match status" value="1"/>
</dbReference>
<dbReference type="PANTHER" id="PTHR31760:SF0">
    <property type="entry name" value="S-ADENOSYL-L-METHIONINE-DEPENDENT METHYLTRANSFERASES SUPERFAMILY PROTEIN"/>
    <property type="match status" value="1"/>
</dbReference>
<dbReference type="Pfam" id="PF02527">
    <property type="entry name" value="GidB"/>
    <property type="match status" value="1"/>
</dbReference>
<dbReference type="PIRSF" id="PIRSF003078">
    <property type="entry name" value="GidB"/>
    <property type="match status" value="1"/>
</dbReference>
<dbReference type="SUPFAM" id="SSF53335">
    <property type="entry name" value="S-adenosyl-L-methionine-dependent methyltransferases"/>
    <property type="match status" value="1"/>
</dbReference>
<organism>
    <name type="scientific">Pseudomonas putida (strain GB-1)</name>
    <dbReference type="NCBI Taxonomy" id="76869"/>
    <lineage>
        <taxon>Bacteria</taxon>
        <taxon>Pseudomonadati</taxon>
        <taxon>Pseudomonadota</taxon>
        <taxon>Gammaproteobacteria</taxon>
        <taxon>Pseudomonadales</taxon>
        <taxon>Pseudomonadaceae</taxon>
        <taxon>Pseudomonas</taxon>
    </lineage>
</organism>
<name>RSMG_PSEPG</name>